<comment type="function">
    <text evidence="1">Transports viral genome to neighboring plant cells directly through plasmosdesmata, without any budding. The movement protein allows efficient cell to cell propagation, by bypassing the host cell wall barrier. Acts by forming tubules structures that increase the size exclusion limit (SEL) of plasmodesmata, thereby allowing viral ribonucleocapsids to spread directly to neighboring cells (By similarity).</text>
</comment>
<comment type="subunit">
    <text evidence="1">Homotrimer, through the coiled-coil domain. Interacts with VAP. May interact (via N-terminus) with host prenylated Rab acceptor protein 1D (PRA1D).</text>
</comment>
<comment type="subcellular location">
    <subcellularLocation>
        <location>Host cell junction</location>
        <location>Host plasmodesma</location>
    </subcellularLocation>
    <text>Assembles in tubules that are embedded within modified plasmodesmata.</text>
</comment>
<comment type="similarity">
    <text evidence="2">Belongs to the caulimoviridae movement protein family.</text>
</comment>
<accession>Q00966</accession>
<evidence type="ECO:0000250" key="1"/>
<evidence type="ECO:0000305" key="2"/>
<keyword id="KW-0175">Coiled coil</keyword>
<keyword id="KW-1031">Host cell junction</keyword>
<keyword id="KW-0945">Host-virus interaction</keyword>
<keyword id="KW-0813">Transport</keyword>
<keyword id="KW-0916">Viral movement protein</keyword>
<gene>
    <name type="ORF">ORF I</name>
</gene>
<dbReference type="EMBL" id="M90541">
    <property type="protein sequence ID" value="AAA46354.1"/>
    <property type="molecule type" value="Genomic_DNA"/>
</dbReference>
<dbReference type="Proteomes" id="UP000008441">
    <property type="component" value="Genome"/>
</dbReference>
<dbReference type="GO" id="GO:0044219">
    <property type="term" value="C:host cell plasmodesma"/>
    <property type="evidence" value="ECO:0007669"/>
    <property type="project" value="UniProtKB-SubCell"/>
</dbReference>
<dbReference type="GO" id="GO:0046740">
    <property type="term" value="P:transport of virus in host, cell to cell"/>
    <property type="evidence" value="ECO:0007669"/>
    <property type="project" value="UniProtKB-KW"/>
</dbReference>
<dbReference type="InterPro" id="IPR051596">
    <property type="entry name" value="Caulimoviridae_Movement"/>
</dbReference>
<dbReference type="InterPro" id="IPR028919">
    <property type="entry name" value="Viral_movement"/>
</dbReference>
<dbReference type="PANTHER" id="PTHR47599">
    <property type="entry name" value="CELL-TO-CELL MOVEMENT PROTEIN"/>
    <property type="match status" value="1"/>
</dbReference>
<dbReference type="PANTHER" id="PTHR47599:SF3">
    <property type="entry name" value="CELL-TO-CELL MOVEMENT PROTEIN"/>
    <property type="match status" value="1"/>
</dbReference>
<dbReference type="Pfam" id="PF01107">
    <property type="entry name" value="MP"/>
    <property type="match status" value="1"/>
</dbReference>
<feature type="chain" id="PRO_0000222061" description="Movement protein">
    <location>
        <begin position="1"/>
        <end position="327"/>
    </location>
</feature>
<feature type="coiled-coil region" evidence="1">
    <location>
        <begin position="297"/>
        <end position="327"/>
    </location>
</feature>
<sequence length="327" mass="36870">MDLYPEEKTQSKQSHNSENNMQIFKSENSDGFSSDLMISNDQLKNISKTQLTLEKEKIFKMPNVLSQVMKKAFSRKNEILYCVSTKELSVDIHDATGKVYLPLITKEEINKRLSSLKPEVRKTMSMVHLGAVKILLKAQFRNGIDTPIKIALIDDRINSRRDCLLGAAKGNLAYGKFMFTVYPKFGISLNTQRLNQTLSLIHDFENKNLMNKGDKVMTITYIVGYALTNSHHSIDYQSNATIELEDVFQEIGNVQQCDFCTIQNDECNWAIDIAQNKALLGAKTQSQIGNSLQIGNSASSSNTENELARVSQNIDLLKNKLKEICGE</sequence>
<name>MVP_CAMVN</name>
<organismHost>
    <name type="scientific">Arabidopsis thaliana</name>
    <name type="common">Mouse-ear cress</name>
    <dbReference type="NCBI Taxonomy" id="3702"/>
</organismHost>
<organismHost>
    <name type="scientific">Brassica</name>
    <dbReference type="NCBI Taxonomy" id="3705"/>
</organismHost>
<organismHost>
    <name type="scientific">Raphanus</name>
    <dbReference type="NCBI Taxonomy" id="3725"/>
</organismHost>
<reference key="1">
    <citation type="journal article" date="1992" name="Plant Physiol.">
        <title>Nucleotide sequence of cauliflower mosaic virus isolate NY8153.</title>
        <authorList>
            <person name="Chenault K.D."/>
            <person name="Steffens D.L."/>
            <person name="Melcher U.K."/>
        </authorList>
    </citation>
    <scope>NUCLEOTIDE SEQUENCE [GENOMIC DNA]</scope>
</reference>
<proteinExistence type="inferred from homology"/>
<protein>
    <recommendedName>
        <fullName>Movement protein</fullName>
        <shortName>Mov</shortName>
    </recommendedName>
    <alternativeName>
        <fullName>Cell-to-cell transport protein</fullName>
    </alternativeName>
</protein>
<organism>
    <name type="scientific">Cauliflower mosaic virus (strain NY8153)</name>
    <name type="common">CaMV</name>
    <dbReference type="NCBI Taxonomy" id="31557"/>
    <lineage>
        <taxon>Viruses</taxon>
        <taxon>Riboviria</taxon>
        <taxon>Pararnavirae</taxon>
        <taxon>Artverviricota</taxon>
        <taxon>Revtraviricetes</taxon>
        <taxon>Ortervirales</taxon>
        <taxon>Caulimoviridae</taxon>
        <taxon>Caulimovirus</taxon>
        <taxon>Caulimovirus tessellobrassicae</taxon>
    </lineage>
</organism>